<sequence length="341" mass="34899">MTLQDYIERATNGVDLSHETSRKAAKLLFEDATEAQIGALLTALRAKGETETEIAGFARGMRDAARTITPDRTPLVDTCGTGGDDYDTINISTTSAIVAAGAGAAVAKHGNYSVSSLSGSADVLSVAGADVKAEPPAVEAAIERDGIGFMLAPVFHPAMKAVIGPRKELGMRTIFNILGPLTNPAGADAQVIGVYDPDLVPVLGRALTQLPVERALVVHGSGMDEIALHDTTTVAEVIGDNVDGYTLSASSIGLDSAPVEAVAGGTPEENAADLRGIVTGETTGPKRDIILANAGAAIYVAGLADDIETGVEQAATAIDTGDAKATFETLCEPNSASTEQK</sequence>
<accession>Q18FI8</accession>
<evidence type="ECO:0000255" key="1">
    <source>
        <dbReference type="HAMAP-Rule" id="MF_00211"/>
    </source>
</evidence>
<keyword id="KW-0028">Amino-acid biosynthesis</keyword>
<keyword id="KW-0057">Aromatic amino acid biosynthesis</keyword>
<keyword id="KW-0328">Glycosyltransferase</keyword>
<keyword id="KW-0460">Magnesium</keyword>
<keyword id="KW-0479">Metal-binding</keyword>
<keyword id="KW-1185">Reference proteome</keyword>
<keyword id="KW-0808">Transferase</keyword>
<keyword id="KW-0822">Tryptophan biosynthesis</keyword>
<reference key="1">
    <citation type="journal article" date="2006" name="BMC Genomics">
        <title>The genome of the square archaeon Haloquadratum walsbyi: life at the limits of water activity.</title>
        <authorList>
            <person name="Bolhuis H."/>
            <person name="Palm P."/>
            <person name="Wende A."/>
            <person name="Falb M."/>
            <person name="Rampp M."/>
            <person name="Rodriguez-Valera F."/>
            <person name="Pfeiffer F."/>
            <person name="Oesterhelt D."/>
        </authorList>
    </citation>
    <scope>NUCLEOTIDE SEQUENCE [LARGE SCALE GENOMIC DNA]</scope>
    <source>
        <strain>DSM 16790 / HBSQ001</strain>
    </source>
</reference>
<gene>
    <name evidence="1" type="primary">trpD</name>
    <name type="ordered locus">HQ_3169A</name>
</gene>
<proteinExistence type="inferred from homology"/>
<organism>
    <name type="scientific">Haloquadratum walsbyi (strain DSM 16790 / HBSQ001)</name>
    <dbReference type="NCBI Taxonomy" id="362976"/>
    <lineage>
        <taxon>Archaea</taxon>
        <taxon>Methanobacteriati</taxon>
        <taxon>Methanobacteriota</taxon>
        <taxon>Stenosarchaea group</taxon>
        <taxon>Halobacteria</taxon>
        <taxon>Halobacteriales</taxon>
        <taxon>Haloferacaceae</taxon>
        <taxon>Haloquadratum</taxon>
    </lineage>
</organism>
<comment type="function">
    <text evidence="1">Catalyzes the transfer of the phosphoribosyl group of 5-phosphorylribose-1-pyrophosphate (PRPP) to anthranilate to yield N-(5'-phosphoribosyl)-anthranilate (PRA).</text>
</comment>
<comment type="catalytic activity">
    <reaction evidence="1">
        <text>N-(5-phospho-beta-D-ribosyl)anthranilate + diphosphate = 5-phospho-alpha-D-ribose 1-diphosphate + anthranilate</text>
        <dbReference type="Rhea" id="RHEA:11768"/>
        <dbReference type="ChEBI" id="CHEBI:16567"/>
        <dbReference type="ChEBI" id="CHEBI:18277"/>
        <dbReference type="ChEBI" id="CHEBI:33019"/>
        <dbReference type="ChEBI" id="CHEBI:58017"/>
        <dbReference type="EC" id="2.4.2.18"/>
    </reaction>
</comment>
<comment type="cofactor">
    <cofactor evidence="1">
        <name>Mg(2+)</name>
        <dbReference type="ChEBI" id="CHEBI:18420"/>
    </cofactor>
    <text evidence="1">Binds 2 magnesium ions per monomer.</text>
</comment>
<comment type="pathway">
    <text evidence="1">Amino-acid biosynthesis; L-tryptophan biosynthesis; L-tryptophan from chorismate: step 2/5.</text>
</comment>
<comment type="subunit">
    <text evidence="1">Homodimer.</text>
</comment>
<comment type="similarity">
    <text evidence="1">Belongs to the anthranilate phosphoribosyltransferase family.</text>
</comment>
<name>TRPD_HALWD</name>
<dbReference type="EC" id="2.4.2.18" evidence="1"/>
<dbReference type="EMBL" id="AM180088">
    <property type="protein sequence ID" value="CAJ53269.1"/>
    <property type="molecule type" value="Genomic_DNA"/>
</dbReference>
<dbReference type="RefSeq" id="WP_011572375.1">
    <property type="nucleotide sequence ID" value="NC_008212.1"/>
</dbReference>
<dbReference type="SMR" id="Q18FI8"/>
<dbReference type="STRING" id="362976.HQ_3169A"/>
<dbReference type="GeneID" id="4194855"/>
<dbReference type="KEGG" id="hwa:HQ_3169A"/>
<dbReference type="eggNOG" id="arCOG02012">
    <property type="taxonomic scope" value="Archaea"/>
</dbReference>
<dbReference type="HOGENOM" id="CLU_034315_2_1_2"/>
<dbReference type="UniPathway" id="UPA00035">
    <property type="reaction ID" value="UER00041"/>
</dbReference>
<dbReference type="Proteomes" id="UP000001975">
    <property type="component" value="Chromosome"/>
</dbReference>
<dbReference type="GO" id="GO:0005829">
    <property type="term" value="C:cytosol"/>
    <property type="evidence" value="ECO:0007669"/>
    <property type="project" value="TreeGrafter"/>
</dbReference>
<dbReference type="GO" id="GO:0004048">
    <property type="term" value="F:anthranilate phosphoribosyltransferase activity"/>
    <property type="evidence" value="ECO:0007669"/>
    <property type="project" value="UniProtKB-UniRule"/>
</dbReference>
<dbReference type="GO" id="GO:0000287">
    <property type="term" value="F:magnesium ion binding"/>
    <property type="evidence" value="ECO:0007669"/>
    <property type="project" value="UniProtKB-UniRule"/>
</dbReference>
<dbReference type="GO" id="GO:0000162">
    <property type="term" value="P:L-tryptophan biosynthetic process"/>
    <property type="evidence" value="ECO:0007669"/>
    <property type="project" value="UniProtKB-UniRule"/>
</dbReference>
<dbReference type="FunFam" id="3.40.1030.10:FF:000002">
    <property type="entry name" value="Anthranilate phosphoribosyltransferase"/>
    <property type="match status" value="1"/>
</dbReference>
<dbReference type="Gene3D" id="3.40.1030.10">
    <property type="entry name" value="Nucleoside phosphorylase/phosphoribosyltransferase catalytic domain"/>
    <property type="match status" value="1"/>
</dbReference>
<dbReference type="Gene3D" id="1.20.970.10">
    <property type="entry name" value="Transferase, Pyrimidine Nucleoside Phosphorylase, Chain C"/>
    <property type="match status" value="1"/>
</dbReference>
<dbReference type="HAMAP" id="MF_00211">
    <property type="entry name" value="TrpD"/>
    <property type="match status" value="1"/>
</dbReference>
<dbReference type="InterPro" id="IPR005940">
    <property type="entry name" value="Anthranilate_Pribosyl_Tfrase"/>
</dbReference>
<dbReference type="InterPro" id="IPR000312">
    <property type="entry name" value="Glycosyl_Trfase_fam3"/>
</dbReference>
<dbReference type="InterPro" id="IPR017459">
    <property type="entry name" value="Glycosyl_Trfase_fam3_N_dom"/>
</dbReference>
<dbReference type="InterPro" id="IPR036320">
    <property type="entry name" value="Glycosyl_Trfase_fam3_N_dom_sf"/>
</dbReference>
<dbReference type="InterPro" id="IPR035902">
    <property type="entry name" value="Nuc_phospho_transferase"/>
</dbReference>
<dbReference type="NCBIfam" id="TIGR01245">
    <property type="entry name" value="trpD"/>
    <property type="match status" value="1"/>
</dbReference>
<dbReference type="PANTHER" id="PTHR43285">
    <property type="entry name" value="ANTHRANILATE PHOSPHORIBOSYLTRANSFERASE"/>
    <property type="match status" value="1"/>
</dbReference>
<dbReference type="PANTHER" id="PTHR43285:SF2">
    <property type="entry name" value="ANTHRANILATE PHOSPHORIBOSYLTRANSFERASE"/>
    <property type="match status" value="1"/>
</dbReference>
<dbReference type="Pfam" id="PF02885">
    <property type="entry name" value="Glycos_trans_3N"/>
    <property type="match status" value="1"/>
</dbReference>
<dbReference type="Pfam" id="PF00591">
    <property type="entry name" value="Glycos_transf_3"/>
    <property type="match status" value="1"/>
</dbReference>
<dbReference type="SUPFAM" id="SSF52418">
    <property type="entry name" value="Nucleoside phosphorylase/phosphoribosyltransferase catalytic domain"/>
    <property type="match status" value="1"/>
</dbReference>
<dbReference type="SUPFAM" id="SSF47648">
    <property type="entry name" value="Nucleoside phosphorylase/phosphoribosyltransferase N-terminal domain"/>
    <property type="match status" value="1"/>
</dbReference>
<protein>
    <recommendedName>
        <fullName evidence="1">Anthranilate phosphoribosyltransferase</fullName>
        <ecNumber evidence="1">2.4.2.18</ecNumber>
    </recommendedName>
</protein>
<feature type="chain" id="PRO_0000325479" description="Anthranilate phosphoribosyltransferase">
    <location>
        <begin position="1"/>
        <end position="341"/>
    </location>
</feature>
<feature type="binding site" evidence="1">
    <location>
        <position position="80"/>
    </location>
    <ligand>
        <name>5-phospho-alpha-D-ribose 1-diphosphate</name>
        <dbReference type="ChEBI" id="CHEBI:58017"/>
    </ligand>
</feature>
<feature type="binding site" evidence="1">
    <location>
        <position position="80"/>
    </location>
    <ligand>
        <name>anthranilate</name>
        <dbReference type="ChEBI" id="CHEBI:16567"/>
        <label>1</label>
    </ligand>
</feature>
<feature type="binding site" evidence="1">
    <location>
        <begin position="83"/>
        <end position="84"/>
    </location>
    <ligand>
        <name>5-phospho-alpha-D-ribose 1-diphosphate</name>
        <dbReference type="ChEBI" id="CHEBI:58017"/>
    </ligand>
</feature>
<feature type="binding site" evidence="1">
    <location>
        <position position="88"/>
    </location>
    <ligand>
        <name>5-phospho-alpha-D-ribose 1-diphosphate</name>
        <dbReference type="ChEBI" id="CHEBI:58017"/>
    </ligand>
</feature>
<feature type="binding site" evidence="1">
    <location>
        <begin position="90"/>
        <end position="93"/>
    </location>
    <ligand>
        <name>5-phospho-alpha-D-ribose 1-diphosphate</name>
        <dbReference type="ChEBI" id="CHEBI:58017"/>
    </ligand>
</feature>
<feature type="binding site" evidence="1">
    <location>
        <position position="92"/>
    </location>
    <ligand>
        <name>Mg(2+)</name>
        <dbReference type="ChEBI" id="CHEBI:18420"/>
        <label>1</label>
    </ligand>
</feature>
<feature type="binding site" evidence="1">
    <location>
        <begin position="108"/>
        <end position="116"/>
    </location>
    <ligand>
        <name>5-phospho-alpha-D-ribose 1-diphosphate</name>
        <dbReference type="ChEBI" id="CHEBI:58017"/>
    </ligand>
</feature>
<feature type="binding site" evidence="1">
    <location>
        <position position="111"/>
    </location>
    <ligand>
        <name>anthranilate</name>
        <dbReference type="ChEBI" id="CHEBI:16567"/>
        <label>1</label>
    </ligand>
</feature>
<feature type="binding site" evidence="1">
    <location>
        <position position="120"/>
    </location>
    <ligand>
        <name>5-phospho-alpha-D-ribose 1-diphosphate</name>
        <dbReference type="ChEBI" id="CHEBI:58017"/>
    </ligand>
</feature>
<feature type="binding site" evidence="1">
    <location>
        <position position="166"/>
    </location>
    <ligand>
        <name>anthranilate</name>
        <dbReference type="ChEBI" id="CHEBI:16567"/>
        <label>2</label>
    </ligand>
</feature>
<feature type="binding site" evidence="1">
    <location>
        <position position="224"/>
    </location>
    <ligand>
        <name>Mg(2+)</name>
        <dbReference type="ChEBI" id="CHEBI:18420"/>
        <label>2</label>
    </ligand>
</feature>
<feature type="binding site" evidence="1">
    <location>
        <position position="225"/>
    </location>
    <ligand>
        <name>Mg(2+)</name>
        <dbReference type="ChEBI" id="CHEBI:18420"/>
        <label>1</label>
    </ligand>
</feature>
<feature type="binding site" evidence="1">
    <location>
        <position position="225"/>
    </location>
    <ligand>
        <name>Mg(2+)</name>
        <dbReference type="ChEBI" id="CHEBI:18420"/>
        <label>2</label>
    </ligand>
</feature>